<feature type="chain" id="PRO_0000196121" description="Endocuticle structural glycoprotein SgAbd-4">
    <location>
        <begin position="1"/>
        <end position="116"/>
    </location>
</feature>
<feature type="domain" description="Chitin-binding type R&amp;R" evidence="1">
    <location>
        <begin position="20"/>
        <end position="92"/>
    </location>
</feature>
<feature type="modified residue" description="Pyrrolidone carboxylic acid" evidence="2">
    <location>
        <position position="1"/>
    </location>
</feature>
<feature type="modified residue" description="Proline amide" evidence="2">
    <location>
        <position position="116"/>
    </location>
</feature>
<feature type="glycosylation site" description="O-linked (HexNAc...) threonine">
    <location>
        <position position="90"/>
    </location>
</feature>
<feature type="glycosylation site" description="O-linked (HexNAc...) threonine">
    <location>
        <position position="107"/>
    </location>
</feature>
<feature type="glycosylation site" description="O-linked (HexNAc...) serine">
    <location>
        <position position="110"/>
    </location>
</feature>
<feature type="glycosylation site" description="O-linked (HexNAc...) threonine">
    <location>
        <position position="111"/>
    </location>
</feature>
<accession>Q7M4F1</accession>
<keyword id="KW-0027">Amidation</keyword>
<keyword id="KW-0193">Cuticle</keyword>
<keyword id="KW-0903">Direct protein sequencing</keyword>
<keyword id="KW-0325">Glycoprotein</keyword>
<keyword id="KW-0873">Pyrrolidone carboxylic acid</keyword>
<sequence length="116" mass="12502">QAPPDKVIPIISQNEVRNPDGSYQWNYETGNGIKADETGTLKKGSKPDEGDFIVAQGSFSYTGPDGTAYSVQYQADDENGFVPQGAHFPTPPPIPPAIQRALDYLATLPSTPEPRP</sequence>
<protein>
    <recommendedName>
        <fullName>Endocuticle structural glycoprotein SgAbd-4</fullName>
    </recommendedName>
</protein>
<proteinExistence type="evidence at protein level"/>
<reference key="1">
    <citation type="journal article" date="1998" name="Insect Biochem. Mol. Biol.">
        <title>Amino acid sequence studies on endocuticular proteins from the desert locust, Schistocerca gregaria.</title>
        <authorList>
            <person name="Andersen S.O."/>
        </authorList>
    </citation>
    <scope>PROTEIN SEQUENCE</scope>
    <scope>PYROGLUTAMATE FORMATION AT GLN-1</scope>
    <scope>AMIDATION AT PRO-116</scope>
    <scope>POST-TRANSLATIONAL MODIFICATIONS</scope>
    <source>
        <strain>Albino</strain>
        <tissue>Cuticle</tissue>
    </source>
</reference>
<comment type="function">
    <text>Component of the abdominal endocuticle.</text>
</comment>
<dbReference type="PIR" id="S78094">
    <property type="entry name" value="S78094"/>
</dbReference>
<dbReference type="EnsemblMetazoa" id="XM_049982734.1">
    <property type="protein sequence ID" value="XP_049838691.1"/>
    <property type="gene ID" value="LOC126284086"/>
</dbReference>
<dbReference type="OrthoDB" id="6593286at2759"/>
<dbReference type="GO" id="GO:0062129">
    <property type="term" value="C:chitin-based extracellular matrix"/>
    <property type="evidence" value="ECO:0007669"/>
    <property type="project" value="TreeGrafter"/>
</dbReference>
<dbReference type="GO" id="GO:0008010">
    <property type="term" value="F:structural constituent of chitin-based larval cuticle"/>
    <property type="evidence" value="ECO:0007669"/>
    <property type="project" value="TreeGrafter"/>
</dbReference>
<dbReference type="InterPro" id="IPR031311">
    <property type="entry name" value="CHIT_BIND_RR_consensus"/>
</dbReference>
<dbReference type="InterPro" id="IPR050468">
    <property type="entry name" value="Cuticle_Struct_Prot"/>
</dbReference>
<dbReference type="InterPro" id="IPR000618">
    <property type="entry name" value="Insect_cuticle"/>
</dbReference>
<dbReference type="PANTHER" id="PTHR10380">
    <property type="entry name" value="CUTICLE PROTEIN"/>
    <property type="match status" value="1"/>
</dbReference>
<dbReference type="PANTHER" id="PTHR10380:SF241">
    <property type="entry name" value="CUTICULAR PROTEIN 47EG-RELATED"/>
    <property type="match status" value="1"/>
</dbReference>
<dbReference type="Pfam" id="PF00379">
    <property type="entry name" value="Chitin_bind_4"/>
    <property type="match status" value="1"/>
</dbReference>
<dbReference type="PRINTS" id="PR00947">
    <property type="entry name" value="CUTICLE"/>
</dbReference>
<dbReference type="PROSITE" id="PS00233">
    <property type="entry name" value="CHIT_BIND_RR_1"/>
    <property type="match status" value="1"/>
</dbReference>
<dbReference type="PROSITE" id="PS51155">
    <property type="entry name" value="CHIT_BIND_RR_2"/>
    <property type="match status" value="1"/>
</dbReference>
<evidence type="ECO:0000255" key="1">
    <source>
        <dbReference type="PROSITE-ProRule" id="PRU00497"/>
    </source>
</evidence>
<evidence type="ECO:0000269" key="2">
    <source>
    </source>
</evidence>
<name>CUD4_SCHGR</name>
<organism>
    <name type="scientific">Schistocerca gregaria</name>
    <name type="common">Desert locust</name>
    <name type="synonym">Gryllus gregarius</name>
    <dbReference type="NCBI Taxonomy" id="7010"/>
    <lineage>
        <taxon>Eukaryota</taxon>
        <taxon>Metazoa</taxon>
        <taxon>Ecdysozoa</taxon>
        <taxon>Arthropoda</taxon>
        <taxon>Hexapoda</taxon>
        <taxon>Insecta</taxon>
        <taxon>Pterygota</taxon>
        <taxon>Neoptera</taxon>
        <taxon>Polyneoptera</taxon>
        <taxon>Orthoptera</taxon>
        <taxon>Caelifera</taxon>
        <taxon>Acrididea</taxon>
        <taxon>Acridomorpha</taxon>
        <taxon>Acridoidea</taxon>
        <taxon>Acrididae</taxon>
        <taxon>Cyrtacanthacridinae</taxon>
        <taxon>Schistocerca</taxon>
    </lineage>
</organism>